<reference key="1">
    <citation type="journal article" date="2002" name="DNA Res.">
        <title>Complete genomic sequence of nitrogen-fixing symbiotic bacterium Bradyrhizobium japonicum USDA110.</title>
        <authorList>
            <person name="Kaneko T."/>
            <person name="Nakamura Y."/>
            <person name="Sato S."/>
            <person name="Minamisawa K."/>
            <person name="Uchiumi T."/>
            <person name="Sasamoto S."/>
            <person name="Watanabe A."/>
            <person name="Idesawa K."/>
            <person name="Iriguchi M."/>
            <person name="Kawashima K."/>
            <person name="Kohara M."/>
            <person name="Matsumoto M."/>
            <person name="Shimpo S."/>
            <person name="Tsuruoka H."/>
            <person name="Wada T."/>
            <person name="Yamada M."/>
            <person name="Tabata S."/>
        </authorList>
    </citation>
    <scope>NUCLEOTIDE SEQUENCE [LARGE SCALE GENOMIC DNA]</scope>
    <source>
        <strain>JCM 10833 / BCRC 13528 / IAM 13628 / NBRC 14792 / USDA 110</strain>
    </source>
</reference>
<comment type="function">
    <text evidence="1">DNA-dependent RNA polymerase catalyzes the transcription of DNA into RNA using the four ribonucleoside triphosphates as substrates.</text>
</comment>
<comment type="catalytic activity">
    <reaction evidence="1">
        <text>RNA(n) + a ribonucleoside 5'-triphosphate = RNA(n+1) + diphosphate</text>
        <dbReference type="Rhea" id="RHEA:21248"/>
        <dbReference type="Rhea" id="RHEA-COMP:14527"/>
        <dbReference type="Rhea" id="RHEA-COMP:17342"/>
        <dbReference type="ChEBI" id="CHEBI:33019"/>
        <dbReference type="ChEBI" id="CHEBI:61557"/>
        <dbReference type="ChEBI" id="CHEBI:140395"/>
        <dbReference type="EC" id="2.7.7.6"/>
    </reaction>
</comment>
<comment type="cofactor">
    <cofactor evidence="1">
        <name>Mg(2+)</name>
        <dbReference type="ChEBI" id="CHEBI:18420"/>
    </cofactor>
    <text evidence="1">Binds 1 Mg(2+) ion per subunit.</text>
</comment>
<comment type="cofactor">
    <cofactor evidence="1">
        <name>Zn(2+)</name>
        <dbReference type="ChEBI" id="CHEBI:29105"/>
    </cofactor>
    <text evidence="1">Binds 2 Zn(2+) ions per subunit.</text>
</comment>
<comment type="subunit">
    <text evidence="1">The RNAP catalytic core consists of 2 alpha, 1 beta, 1 beta' and 1 omega subunit. When a sigma factor is associated with the core the holoenzyme is formed, which can initiate transcription.</text>
</comment>
<comment type="similarity">
    <text evidence="1">Belongs to the RNA polymerase beta' chain family.</text>
</comment>
<organism>
    <name type="scientific">Bradyrhizobium diazoefficiens (strain JCM 10833 / BCRC 13528 / IAM 13628 / NBRC 14792 / USDA 110)</name>
    <dbReference type="NCBI Taxonomy" id="224911"/>
    <lineage>
        <taxon>Bacteria</taxon>
        <taxon>Pseudomonadati</taxon>
        <taxon>Pseudomonadota</taxon>
        <taxon>Alphaproteobacteria</taxon>
        <taxon>Hyphomicrobiales</taxon>
        <taxon>Nitrobacteraceae</taxon>
        <taxon>Bradyrhizobium</taxon>
    </lineage>
</organism>
<protein>
    <recommendedName>
        <fullName evidence="1">DNA-directed RNA polymerase subunit beta'</fullName>
        <shortName evidence="1">RNAP subunit beta'</shortName>
        <ecNumber evidence="1">2.7.7.6</ecNumber>
    </recommendedName>
    <alternativeName>
        <fullName evidence="1">RNA polymerase subunit beta'</fullName>
    </alternativeName>
    <alternativeName>
        <fullName evidence="1">Transcriptase subunit beta'</fullName>
    </alternativeName>
</protein>
<keyword id="KW-0240">DNA-directed RNA polymerase</keyword>
<keyword id="KW-0460">Magnesium</keyword>
<keyword id="KW-0479">Metal-binding</keyword>
<keyword id="KW-0548">Nucleotidyltransferase</keyword>
<keyword id="KW-1185">Reference proteome</keyword>
<keyword id="KW-0804">Transcription</keyword>
<keyword id="KW-0808">Transferase</keyword>
<keyword id="KW-0862">Zinc</keyword>
<feature type="chain" id="PRO_0000067716" description="DNA-directed RNA polymerase subunit beta'">
    <location>
        <begin position="1"/>
        <end position="1398"/>
    </location>
</feature>
<feature type="region of interest" description="Disordered" evidence="2">
    <location>
        <begin position="1377"/>
        <end position="1398"/>
    </location>
</feature>
<feature type="compositionally biased region" description="Low complexity" evidence="2">
    <location>
        <begin position="1380"/>
        <end position="1392"/>
    </location>
</feature>
<feature type="binding site" evidence="1">
    <location>
        <position position="71"/>
    </location>
    <ligand>
        <name>Zn(2+)</name>
        <dbReference type="ChEBI" id="CHEBI:29105"/>
        <label>1</label>
    </ligand>
</feature>
<feature type="binding site" evidence="1">
    <location>
        <position position="73"/>
    </location>
    <ligand>
        <name>Zn(2+)</name>
        <dbReference type="ChEBI" id="CHEBI:29105"/>
        <label>1</label>
    </ligand>
</feature>
<feature type="binding site" evidence="1">
    <location>
        <position position="86"/>
    </location>
    <ligand>
        <name>Zn(2+)</name>
        <dbReference type="ChEBI" id="CHEBI:29105"/>
        <label>1</label>
    </ligand>
</feature>
<feature type="binding site" evidence="1">
    <location>
        <position position="89"/>
    </location>
    <ligand>
        <name>Zn(2+)</name>
        <dbReference type="ChEBI" id="CHEBI:29105"/>
        <label>1</label>
    </ligand>
</feature>
<feature type="binding site" evidence="1">
    <location>
        <position position="462"/>
    </location>
    <ligand>
        <name>Mg(2+)</name>
        <dbReference type="ChEBI" id="CHEBI:18420"/>
    </ligand>
</feature>
<feature type="binding site" evidence="1">
    <location>
        <position position="464"/>
    </location>
    <ligand>
        <name>Mg(2+)</name>
        <dbReference type="ChEBI" id="CHEBI:18420"/>
    </ligand>
</feature>
<feature type="binding site" evidence="1">
    <location>
        <position position="466"/>
    </location>
    <ligand>
        <name>Mg(2+)</name>
        <dbReference type="ChEBI" id="CHEBI:18420"/>
    </ligand>
</feature>
<feature type="binding site" evidence="1">
    <location>
        <position position="810"/>
    </location>
    <ligand>
        <name>Zn(2+)</name>
        <dbReference type="ChEBI" id="CHEBI:29105"/>
        <label>2</label>
    </ligand>
</feature>
<feature type="binding site" evidence="1">
    <location>
        <position position="883"/>
    </location>
    <ligand>
        <name>Zn(2+)</name>
        <dbReference type="ChEBI" id="CHEBI:29105"/>
        <label>2</label>
    </ligand>
</feature>
<feature type="binding site" evidence="1">
    <location>
        <position position="890"/>
    </location>
    <ligand>
        <name>Zn(2+)</name>
        <dbReference type="ChEBI" id="CHEBI:29105"/>
        <label>2</label>
    </ligand>
</feature>
<feature type="binding site" evidence="1">
    <location>
        <position position="893"/>
    </location>
    <ligand>
        <name>Zn(2+)</name>
        <dbReference type="ChEBI" id="CHEBI:29105"/>
        <label>2</label>
    </ligand>
</feature>
<dbReference type="EC" id="2.7.7.6" evidence="1"/>
<dbReference type="EMBL" id="BA000040">
    <property type="protein sequence ID" value="BAC50674.1"/>
    <property type="molecule type" value="Genomic_DNA"/>
</dbReference>
<dbReference type="RefSeq" id="NP_772049.1">
    <property type="nucleotide sequence ID" value="NC_004463.1"/>
</dbReference>
<dbReference type="RefSeq" id="WP_011088158.1">
    <property type="nucleotide sequence ID" value="NC_004463.1"/>
</dbReference>
<dbReference type="SMR" id="Q89J75"/>
<dbReference type="FunCoup" id="Q89J75">
    <property type="interactions" value="719"/>
</dbReference>
<dbReference type="STRING" id="224911.AAV28_24455"/>
<dbReference type="EnsemblBacteria" id="BAC50674">
    <property type="protein sequence ID" value="BAC50674"/>
    <property type="gene ID" value="BAC50674"/>
</dbReference>
<dbReference type="GeneID" id="46492407"/>
<dbReference type="KEGG" id="bja:bll5409"/>
<dbReference type="PATRIC" id="fig|224911.44.peg.5309"/>
<dbReference type="eggNOG" id="COG0086">
    <property type="taxonomic scope" value="Bacteria"/>
</dbReference>
<dbReference type="HOGENOM" id="CLU_000524_3_1_5"/>
<dbReference type="InParanoid" id="Q89J75"/>
<dbReference type="OrthoDB" id="9815296at2"/>
<dbReference type="PhylomeDB" id="Q89J75"/>
<dbReference type="Proteomes" id="UP000002526">
    <property type="component" value="Chromosome"/>
</dbReference>
<dbReference type="GO" id="GO:0000428">
    <property type="term" value="C:DNA-directed RNA polymerase complex"/>
    <property type="evidence" value="ECO:0007669"/>
    <property type="project" value="UniProtKB-KW"/>
</dbReference>
<dbReference type="GO" id="GO:0003677">
    <property type="term" value="F:DNA binding"/>
    <property type="evidence" value="ECO:0007669"/>
    <property type="project" value="UniProtKB-UniRule"/>
</dbReference>
<dbReference type="GO" id="GO:0003899">
    <property type="term" value="F:DNA-directed RNA polymerase activity"/>
    <property type="evidence" value="ECO:0007669"/>
    <property type="project" value="UniProtKB-UniRule"/>
</dbReference>
<dbReference type="GO" id="GO:0000287">
    <property type="term" value="F:magnesium ion binding"/>
    <property type="evidence" value="ECO:0007669"/>
    <property type="project" value="UniProtKB-UniRule"/>
</dbReference>
<dbReference type="GO" id="GO:0008270">
    <property type="term" value="F:zinc ion binding"/>
    <property type="evidence" value="ECO:0007669"/>
    <property type="project" value="UniProtKB-UniRule"/>
</dbReference>
<dbReference type="GO" id="GO:0006351">
    <property type="term" value="P:DNA-templated transcription"/>
    <property type="evidence" value="ECO:0007669"/>
    <property type="project" value="UniProtKB-UniRule"/>
</dbReference>
<dbReference type="CDD" id="cd02655">
    <property type="entry name" value="RNAP_beta'_C"/>
    <property type="match status" value="1"/>
</dbReference>
<dbReference type="CDD" id="cd01609">
    <property type="entry name" value="RNAP_beta'_N"/>
    <property type="match status" value="1"/>
</dbReference>
<dbReference type="Gene3D" id="1.10.132.30">
    <property type="match status" value="1"/>
</dbReference>
<dbReference type="Gene3D" id="1.10.150.390">
    <property type="match status" value="1"/>
</dbReference>
<dbReference type="Gene3D" id="1.10.1790.20">
    <property type="match status" value="1"/>
</dbReference>
<dbReference type="Gene3D" id="1.10.40.90">
    <property type="match status" value="1"/>
</dbReference>
<dbReference type="Gene3D" id="2.40.40.20">
    <property type="match status" value="1"/>
</dbReference>
<dbReference type="Gene3D" id="2.40.50.100">
    <property type="match status" value="3"/>
</dbReference>
<dbReference type="Gene3D" id="4.10.860.120">
    <property type="entry name" value="RNA polymerase II, clamp domain"/>
    <property type="match status" value="1"/>
</dbReference>
<dbReference type="Gene3D" id="1.10.274.100">
    <property type="entry name" value="RNA polymerase Rpb1, domain 3"/>
    <property type="match status" value="2"/>
</dbReference>
<dbReference type="HAMAP" id="MF_01322">
    <property type="entry name" value="RNApol_bact_RpoC"/>
    <property type="match status" value="1"/>
</dbReference>
<dbReference type="InterPro" id="IPR045867">
    <property type="entry name" value="DNA-dir_RpoC_beta_prime"/>
</dbReference>
<dbReference type="InterPro" id="IPR012754">
    <property type="entry name" value="DNA-dir_RpoC_beta_prime_bact"/>
</dbReference>
<dbReference type="InterPro" id="IPR000722">
    <property type="entry name" value="RNA_pol_asu"/>
</dbReference>
<dbReference type="InterPro" id="IPR006592">
    <property type="entry name" value="RNA_pol_N"/>
</dbReference>
<dbReference type="InterPro" id="IPR007080">
    <property type="entry name" value="RNA_pol_Rpb1_1"/>
</dbReference>
<dbReference type="InterPro" id="IPR007066">
    <property type="entry name" value="RNA_pol_Rpb1_3"/>
</dbReference>
<dbReference type="InterPro" id="IPR042102">
    <property type="entry name" value="RNA_pol_Rpb1_3_sf"/>
</dbReference>
<dbReference type="InterPro" id="IPR007083">
    <property type="entry name" value="RNA_pol_Rpb1_4"/>
</dbReference>
<dbReference type="InterPro" id="IPR007081">
    <property type="entry name" value="RNA_pol_Rpb1_5"/>
</dbReference>
<dbReference type="InterPro" id="IPR044893">
    <property type="entry name" value="RNA_pol_Rpb1_clamp_domain"/>
</dbReference>
<dbReference type="InterPro" id="IPR038120">
    <property type="entry name" value="Rpb1_funnel_sf"/>
</dbReference>
<dbReference type="NCBIfam" id="TIGR02386">
    <property type="entry name" value="rpoC_TIGR"/>
    <property type="match status" value="1"/>
</dbReference>
<dbReference type="PANTHER" id="PTHR19376">
    <property type="entry name" value="DNA-DIRECTED RNA POLYMERASE"/>
    <property type="match status" value="1"/>
</dbReference>
<dbReference type="PANTHER" id="PTHR19376:SF54">
    <property type="entry name" value="DNA-DIRECTED RNA POLYMERASE SUBUNIT BETA"/>
    <property type="match status" value="1"/>
</dbReference>
<dbReference type="Pfam" id="PF04997">
    <property type="entry name" value="RNA_pol_Rpb1_1"/>
    <property type="match status" value="1"/>
</dbReference>
<dbReference type="Pfam" id="PF00623">
    <property type="entry name" value="RNA_pol_Rpb1_2"/>
    <property type="match status" value="2"/>
</dbReference>
<dbReference type="Pfam" id="PF04983">
    <property type="entry name" value="RNA_pol_Rpb1_3"/>
    <property type="match status" value="1"/>
</dbReference>
<dbReference type="Pfam" id="PF05000">
    <property type="entry name" value="RNA_pol_Rpb1_4"/>
    <property type="match status" value="1"/>
</dbReference>
<dbReference type="Pfam" id="PF04998">
    <property type="entry name" value="RNA_pol_Rpb1_5"/>
    <property type="match status" value="1"/>
</dbReference>
<dbReference type="SMART" id="SM00663">
    <property type="entry name" value="RPOLA_N"/>
    <property type="match status" value="1"/>
</dbReference>
<dbReference type="SUPFAM" id="SSF64484">
    <property type="entry name" value="beta and beta-prime subunits of DNA dependent RNA-polymerase"/>
    <property type="match status" value="1"/>
</dbReference>
<evidence type="ECO:0000255" key="1">
    <source>
        <dbReference type="HAMAP-Rule" id="MF_01322"/>
    </source>
</evidence>
<evidence type="ECO:0000256" key="2">
    <source>
        <dbReference type="SAM" id="MobiDB-lite"/>
    </source>
</evidence>
<accession>Q89J75</accession>
<sequence length="1398" mass="155427">MNQEIMNLFNPTTPAQVFDQIRISIASPEKILSWSYGEIKKPETINYRTFKPERDGLFCARIFGPIKDYECLCGKYKRMKYKGIICEKCSVEVTLSRVRRERMGHIELAAPVAHIWFLKSLPSRIGLLLDMTLKDLERILYFEYYVVLEPGLTALKDRQLLSEDEYLKAQDEYGQDSFTAMIGAEAIRELLKGMDLEKLEASLRVEMQETDSDIKHKKLAKRLKIVEAFRHSGNKPEWMIMTVVPVIPPDLRPLVPLDGGRFATSDLNDLYRRVINRNNRLKRLMELRAPDIIIRNEKRMLQEAVDALFDNGRRGRVITGANKRPLKSLADMLKGKQGRFRQNLLGKRVDYSGRSVIVVGPELRLHQCGLPKKMALELFKPFIYSRLDAKGLSTTVKQAKKLVEKERPEVWDILDEVIREHPVLLNRAPTLHRLGIQAFEPVLIEGKAIQLHPLVCAAFNADFDGDQMAVHVPLSLEAQLEARVLMMSTNNILHPANGQPIIVPSQDIVLGLYYVSIMREGLPGEGKIFGDMAELEHALHAKVIHLHTKIKYRWQGMDETGKVSTRWIETTAGRVMLGNLLPKNPRISYEIINKLMTKREISGVIDQVYRHCGQKETVIFCDRIMALGFYNAFKAGISFGKDDMVVPHGKWKIVDTTRTLAKDFEQQYNDGLITHGEKYNKVVDAWSKATEEIAKAMMKEISATKKTASGADADINSIYMMAHSGARGSPAQMRQLAGMRGLMAKPSGEIIETPIISNFKEGLSVLEYFNSTHGARKGLADTALKTANSGYLTRRLVDVAQDCIITQDDCGTKLGIKMRAIVDAGTVVASLGSRILGRTACEDVRDSSGKVIIKRGTLMEESHLDAIHQGGVQEVKIRSALTCELVNGICGKCYGRDLARGTPVNHGEAVGVIAAQSIGEPGTQLTMRTFHIGGAAQLNEQSFVESNFDGKIVIRNKAIARNSEGHLIAMVRNMVVAIVDADGTERATHRIQYGSRLHVDEGDTVKRGQRIVEWDPYTRPLLTEVEGTIGFEDLVEGQSISETLDEATGIAKRVVIDWRSTRGGSDLRPAIVVKGKDGKVLKLARGGDARYMLSVDAILSVDIGAKVAPGDILARVSTESAKTRDITGGLPRVAELFEARRPKDAAIIAEIAGTIRFGRDYKNKRRISIEPMDKTDEPREYLIPKGKHIHLQDGDVVEKGDFIVEGNPAPHDILAVKGIEELAAYLVNEIQEVYRLQGVLINDKHIEVIVRQMLQKVEVTDQGDTDMISGEQVDKIEFDALNEKAKEEGKKIATGTPVLLGITKASLQTRSFFSAASFQETTRVLTEAAVNGKVDPLEGLKENVIVGRLIPAGTGASMAKIREVAMKRDKLILDEREKQAAVVSPAPEAELPALPPAE</sequence>
<proteinExistence type="inferred from homology"/>
<name>RPOC_BRADU</name>
<gene>
    <name evidence="1" type="primary">rpoC</name>
    <name type="ordered locus">bll5409</name>
</gene>